<gene>
    <name type="primary">HHT3</name>
</gene>
<organism>
    <name type="scientific">Trichinella pseudospiralis</name>
    <name type="common">Parasitic roundworm</name>
    <dbReference type="NCBI Taxonomy" id="6337"/>
    <lineage>
        <taxon>Eukaryota</taxon>
        <taxon>Metazoa</taxon>
        <taxon>Ecdysozoa</taxon>
        <taxon>Nematoda</taxon>
        <taxon>Enoplea</taxon>
        <taxon>Dorylaimia</taxon>
        <taxon>Trichinellida</taxon>
        <taxon>Trichinellidae</taxon>
        <taxon>Trichinella</taxon>
    </lineage>
</organism>
<comment type="function">
    <text>Core component of nucleosome. Nucleosomes wrap and compact DNA into chromatin, limiting DNA accessibility to the cellular machineries which require DNA as a template. Histones thereby play a central role in transcription regulation, DNA repair, DNA replication and chromosomal stability. DNA accessibility is regulated via a complex set of post-translational modifications of histones, also called histone code, and nucleosome remodeling.</text>
</comment>
<comment type="subunit">
    <text>The nucleosome is a histone octamer containing two molecules each of H2A, H2B, H3 and H4 assembled in one H3-H4 heterotetramer and two H2A-H2B heterodimers. The octamer wraps approximately 147 bp of DNA.</text>
</comment>
<comment type="subcellular location">
    <subcellularLocation>
        <location evidence="1">Nucleus</location>
    </subcellularLocation>
    <subcellularLocation>
        <location evidence="1">Chromosome</location>
    </subcellularLocation>
</comment>
<comment type="PTM">
    <text evidence="1">Phosphorylated at Ser-11. This is required for transcriptional activation through TBP recruitment to the promoters. Phosphorylation at Ser-11 also promotes subsequent acetylation at Lys-15 (By similarity).</text>
</comment>
<comment type="PTM">
    <text evidence="1">Mono-, di- and trimethylation of Lys-5 by the COMPASS complex activates gene expression by regulating transcription elongation and plays a role in telomere length maintenance. Lys-5 methylation enrichment correlates with transcription levels, and occurs in a 5' to 3' gradient with tri-methyl enrichment at the 5'-end of genes, shifting to di-methyl and then mono-methyl. The COMPASS mediated di and trimethylation of Lys-5 requires histone H2B monoubiquitination. Methylation of Lys-37 by SET2 represses gene expression. Methylation of Lys-80 by DOT1 is required for association of SIR proteins with telomeric regions and for telomeric silencing (By similarity).</text>
</comment>
<comment type="PTM">
    <text evidence="1">Acetylation of histone H3 leads to transcriptional activation. Acetylation at Lys-15 is promoted by the phosphorylation at Ser-11. Acetylation at Lys-57 occurs predominantly in newly synthesized H3 molecule during G1, S and G2/M of the cell cycle and may be involved in DNA repair (By similarity).</text>
</comment>
<comment type="similarity">
    <text evidence="3">Belongs to the histone H3 family.</text>
</comment>
<dbReference type="EMBL" id="AF323993">
    <property type="protein sequence ID" value="AAL67159.1"/>
    <property type="molecule type" value="mRNA"/>
</dbReference>
<dbReference type="SMR" id="Q8WSF1"/>
<dbReference type="OrthoDB" id="4025405at2759"/>
<dbReference type="GO" id="GO:0000786">
    <property type="term" value="C:nucleosome"/>
    <property type="evidence" value="ECO:0007669"/>
    <property type="project" value="UniProtKB-KW"/>
</dbReference>
<dbReference type="GO" id="GO:0005634">
    <property type="term" value="C:nucleus"/>
    <property type="evidence" value="ECO:0007669"/>
    <property type="project" value="UniProtKB-SubCell"/>
</dbReference>
<dbReference type="GO" id="GO:0003677">
    <property type="term" value="F:DNA binding"/>
    <property type="evidence" value="ECO:0007669"/>
    <property type="project" value="UniProtKB-KW"/>
</dbReference>
<dbReference type="GO" id="GO:0046982">
    <property type="term" value="F:protein heterodimerization activity"/>
    <property type="evidence" value="ECO:0007669"/>
    <property type="project" value="InterPro"/>
</dbReference>
<dbReference type="GO" id="GO:0030527">
    <property type="term" value="F:structural constituent of chromatin"/>
    <property type="evidence" value="ECO:0007669"/>
    <property type="project" value="InterPro"/>
</dbReference>
<dbReference type="CDD" id="cd22911">
    <property type="entry name" value="HFD_H3"/>
    <property type="match status" value="1"/>
</dbReference>
<dbReference type="FunFam" id="1.10.20.10:FF:000078">
    <property type="entry name" value="Histone H3"/>
    <property type="match status" value="1"/>
</dbReference>
<dbReference type="FunFam" id="1.10.20.10:FF:000044">
    <property type="entry name" value="Histone H3.3"/>
    <property type="match status" value="1"/>
</dbReference>
<dbReference type="Gene3D" id="1.10.20.10">
    <property type="entry name" value="Histone, subunit A"/>
    <property type="match status" value="1"/>
</dbReference>
<dbReference type="InterPro" id="IPR009072">
    <property type="entry name" value="Histone-fold"/>
</dbReference>
<dbReference type="InterPro" id="IPR007125">
    <property type="entry name" value="Histone_H2A/H2B/H3"/>
</dbReference>
<dbReference type="InterPro" id="IPR000164">
    <property type="entry name" value="Histone_H3/CENP-A"/>
</dbReference>
<dbReference type="PANTHER" id="PTHR11426">
    <property type="entry name" value="HISTONE H3"/>
    <property type="match status" value="1"/>
</dbReference>
<dbReference type="Pfam" id="PF00125">
    <property type="entry name" value="Histone"/>
    <property type="match status" value="1"/>
</dbReference>
<dbReference type="PRINTS" id="PR00622">
    <property type="entry name" value="HISTONEH3"/>
</dbReference>
<dbReference type="SMART" id="SM00428">
    <property type="entry name" value="H3"/>
    <property type="match status" value="1"/>
</dbReference>
<dbReference type="SUPFAM" id="SSF47113">
    <property type="entry name" value="Histone-fold"/>
    <property type="match status" value="1"/>
</dbReference>
<dbReference type="PROSITE" id="PS00322">
    <property type="entry name" value="HISTONE_H3_1"/>
    <property type="match status" value="1"/>
</dbReference>
<dbReference type="PROSITE" id="PS00959">
    <property type="entry name" value="HISTONE_H3_2"/>
    <property type="match status" value="1"/>
</dbReference>
<feature type="initiator methionine" description="Removed" evidence="1">
    <location>
        <position position="1"/>
    </location>
</feature>
<feature type="chain" id="PRO_0000221368" description="Histone H3.3">
    <location>
        <begin position="2"/>
        <end position="136"/>
    </location>
</feature>
<feature type="region of interest" description="Disordered" evidence="2">
    <location>
        <begin position="1"/>
        <end position="43"/>
    </location>
</feature>
<feature type="modified residue" description="N6,N6,N6-trimethyllysine; alternate" evidence="1">
    <location>
        <position position="5"/>
    </location>
</feature>
<feature type="modified residue" description="N6,N6-dimethyllysine; alternate" evidence="1">
    <location>
        <position position="5"/>
    </location>
</feature>
<feature type="modified residue" description="N6-methyllysine; alternate" evidence="1">
    <location>
        <position position="5"/>
    </location>
</feature>
<feature type="modified residue" description="N6-acetyllysine; alternate" evidence="1">
    <location>
        <position position="10"/>
    </location>
</feature>
<feature type="modified residue" description="N6-methyllysine; alternate" evidence="1">
    <location>
        <position position="10"/>
    </location>
</feature>
<feature type="modified residue" description="Phosphoserine" evidence="1">
    <location>
        <position position="11"/>
    </location>
</feature>
<feature type="modified residue" description="N6,N6-dimethyllysine; alternate" evidence="1">
    <location>
        <position position="15"/>
    </location>
</feature>
<feature type="modified residue" description="N6-acetyllysine; alternate" evidence="1">
    <location>
        <position position="15"/>
    </location>
</feature>
<feature type="modified residue" description="N6-acetyllysine; alternate" evidence="1">
    <location>
        <position position="19"/>
    </location>
</feature>
<feature type="modified residue" description="N6-methyllysine; alternate" evidence="1">
    <location>
        <position position="19"/>
    </location>
</feature>
<feature type="modified residue" description="N6-acetyllysine; alternate" evidence="1">
    <location>
        <position position="24"/>
    </location>
</feature>
<feature type="modified residue" description="N6-methyllysine; alternate" evidence="1">
    <location>
        <position position="24"/>
    </location>
</feature>
<feature type="modified residue" description="N6,N6,N6-trimethyllysine; alternate" evidence="1">
    <location>
        <position position="28"/>
    </location>
</feature>
<feature type="modified residue" description="N6,N6-dimethyllysine; alternate" evidence="1">
    <location>
        <position position="28"/>
    </location>
</feature>
<feature type="modified residue" description="N6-acetyllysine; alternate" evidence="1">
    <location>
        <position position="28"/>
    </location>
</feature>
<feature type="modified residue" description="N6-methyllysine; alternate" evidence="1">
    <location>
        <position position="28"/>
    </location>
</feature>
<feature type="modified residue" description="N6,N6,N6-trimethyllysine; alternate" evidence="1">
    <location>
        <position position="37"/>
    </location>
</feature>
<feature type="modified residue" description="N6,N6-dimethyllysine; alternate" evidence="1">
    <location>
        <position position="37"/>
    </location>
</feature>
<feature type="modified residue" description="N6-acetyllysine; alternate" evidence="1">
    <location>
        <position position="37"/>
    </location>
</feature>
<feature type="modified residue" description="N6-methyllysine; alternate" evidence="1">
    <location>
        <position position="37"/>
    </location>
</feature>
<feature type="modified residue" description="N6-acetyllysine" evidence="1">
    <location>
        <position position="57"/>
    </location>
</feature>
<feature type="modified residue" description="N6-acetyllysine" evidence="1">
    <location>
        <position position="65"/>
    </location>
</feature>
<feature type="modified residue" description="N6,N6,N6-trimethyllysine; alternate" evidence="1">
    <location>
        <position position="80"/>
    </location>
</feature>
<feature type="modified residue" description="N6,N6-dimethyllysine; alternate" evidence="1">
    <location>
        <position position="80"/>
    </location>
</feature>
<feature type="modified residue" description="N6-methyllysine; alternate" evidence="1">
    <location>
        <position position="80"/>
    </location>
</feature>
<keyword id="KW-0007">Acetylation</keyword>
<keyword id="KW-0158">Chromosome</keyword>
<keyword id="KW-0238">DNA-binding</keyword>
<keyword id="KW-0488">Methylation</keyword>
<keyword id="KW-0544">Nucleosome core</keyword>
<keyword id="KW-0539">Nucleus</keyword>
<keyword id="KW-0597">Phosphoprotein</keyword>
<keyword id="KW-0832">Ubl conjugation</keyword>
<protein>
    <recommendedName>
        <fullName>Histone H3.3</fullName>
    </recommendedName>
</protein>
<accession>Q8WSF1</accession>
<proteinExistence type="evidence at transcript level"/>
<name>H33_TRIPS</name>
<reference key="1">
    <citation type="journal article" date="2001" name="Parasitology">
        <title>Identification of some heat-induced genes of Trichinella spiralis.</title>
        <authorList>
            <person name="Mak C.-H."/>
            <person name="Su K.-W."/>
            <person name="Ko R.C.C."/>
        </authorList>
    </citation>
    <scope>NUCLEOTIDE SEQUENCE [MRNA]</scope>
</reference>
<sequence>MARTKQTARKSTGGKAPRKQLATKAARKSAPSTGGVKKPHRYRPGTVALREIRRYQKSTELLIRKLPFQRLVREIAQDFKTDLRFQSAAIGALQEAAEAYLVGLFEDTNLCAIHAKRVTIMPKDIQLARRIRGERA</sequence>
<evidence type="ECO:0000250" key="1"/>
<evidence type="ECO:0000256" key="2">
    <source>
        <dbReference type="SAM" id="MobiDB-lite"/>
    </source>
</evidence>
<evidence type="ECO:0000305" key="3"/>